<comment type="function">
    <text evidence="1">The RuvA-RuvB-RuvC complex processes Holliday junction (HJ) DNA during genetic recombination and DNA repair. Endonuclease that resolves HJ intermediates. Cleaves cruciform DNA by making single-stranded nicks across the HJ at symmetrical positions within the homologous arms, yielding a 5'-phosphate and a 3'-hydroxyl group; requires a central core of homology in the junction. The consensus cleavage sequence is 5'-(A/T)TT(C/G)-3'. Cleavage occurs on the 3'-side of the TT dinucleotide at the point of strand exchange. HJ branch migration catalyzed by RuvA-RuvB allows RuvC to scan DNA until it finds its consensus sequence, where it cleaves and resolves the cruciform DNA.</text>
</comment>
<comment type="catalytic activity">
    <reaction evidence="1">
        <text>Endonucleolytic cleavage at a junction such as a reciprocal single-stranded crossover between two homologous DNA duplexes (Holliday junction).</text>
        <dbReference type="EC" id="3.1.21.10"/>
    </reaction>
</comment>
<comment type="cofactor">
    <cofactor evidence="1">
        <name>Mg(2+)</name>
        <dbReference type="ChEBI" id="CHEBI:18420"/>
    </cofactor>
    <text evidence="1">Binds 2 Mg(2+) ion per subunit.</text>
</comment>
<comment type="subunit">
    <text evidence="1">Homodimer which binds Holliday junction (HJ) DNA. The HJ becomes 2-fold symmetrical on binding to RuvC with unstacked arms; it has a different conformation from HJ DNA in complex with RuvA. In the full resolvosome a probable DNA-RuvA(4)-RuvB(12)-RuvC(2) complex forms which resolves the HJ.</text>
</comment>
<comment type="subcellular location">
    <subcellularLocation>
        <location evidence="1">Cytoplasm</location>
    </subcellularLocation>
</comment>
<comment type="similarity">
    <text evidence="1">Belongs to the RuvC family.</text>
</comment>
<accession>Q21HN4</accession>
<gene>
    <name evidence="1" type="primary">ruvC</name>
    <name type="ordered locus">Sde_2535</name>
</gene>
<feature type="chain" id="PRO_1000002822" description="Crossover junction endodeoxyribonuclease RuvC">
    <location>
        <begin position="1"/>
        <end position="173"/>
    </location>
</feature>
<feature type="active site" evidence="1">
    <location>
        <position position="8"/>
    </location>
</feature>
<feature type="active site" evidence="1">
    <location>
        <position position="68"/>
    </location>
</feature>
<feature type="active site" evidence="1">
    <location>
        <position position="140"/>
    </location>
</feature>
<feature type="binding site" evidence="1">
    <location>
        <position position="8"/>
    </location>
    <ligand>
        <name>Mg(2+)</name>
        <dbReference type="ChEBI" id="CHEBI:18420"/>
        <label>1</label>
    </ligand>
</feature>
<feature type="binding site" evidence="1">
    <location>
        <position position="68"/>
    </location>
    <ligand>
        <name>Mg(2+)</name>
        <dbReference type="ChEBI" id="CHEBI:18420"/>
        <label>2</label>
    </ligand>
</feature>
<feature type="binding site" evidence="1">
    <location>
        <position position="140"/>
    </location>
    <ligand>
        <name>Mg(2+)</name>
        <dbReference type="ChEBI" id="CHEBI:18420"/>
        <label>1</label>
    </ligand>
</feature>
<keyword id="KW-0963">Cytoplasm</keyword>
<keyword id="KW-0227">DNA damage</keyword>
<keyword id="KW-0233">DNA recombination</keyword>
<keyword id="KW-0234">DNA repair</keyword>
<keyword id="KW-0238">DNA-binding</keyword>
<keyword id="KW-0255">Endonuclease</keyword>
<keyword id="KW-0378">Hydrolase</keyword>
<keyword id="KW-0460">Magnesium</keyword>
<keyword id="KW-0479">Metal-binding</keyword>
<keyword id="KW-0540">Nuclease</keyword>
<keyword id="KW-1185">Reference proteome</keyword>
<proteinExistence type="inferred from homology"/>
<dbReference type="EC" id="3.1.21.10" evidence="1"/>
<dbReference type="EMBL" id="CP000282">
    <property type="protein sequence ID" value="ABD81795.1"/>
    <property type="molecule type" value="Genomic_DNA"/>
</dbReference>
<dbReference type="RefSeq" id="WP_011469012.1">
    <property type="nucleotide sequence ID" value="NC_007912.1"/>
</dbReference>
<dbReference type="SMR" id="Q21HN4"/>
<dbReference type="STRING" id="203122.Sde_2535"/>
<dbReference type="GeneID" id="98614195"/>
<dbReference type="KEGG" id="sde:Sde_2535"/>
<dbReference type="eggNOG" id="COG0817">
    <property type="taxonomic scope" value="Bacteria"/>
</dbReference>
<dbReference type="HOGENOM" id="CLU_091257_2_1_6"/>
<dbReference type="OrthoDB" id="9805499at2"/>
<dbReference type="Proteomes" id="UP000001947">
    <property type="component" value="Chromosome"/>
</dbReference>
<dbReference type="GO" id="GO:0005737">
    <property type="term" value="C:cytoplasm"/>
    <property type="evidence" value="ECO:0007669"/>
    <property type="project" value="UniProtKB-SubCell"/>
</dbReference>
<dbReference type="GO" id="GO:0048476">
    <property type="term" value="C:Holliday junction resolvase complex"/>
    <property type="evidence" value="ECO:0007669"/>
    <property type="project" value="UniProtKB-UniRule"/>
</dbReference>
<dbReference type="GO" id="GO:0008821">
    <property type="term" value="F:crossover junction DNA endonuclease activity"/>
    <property type="evidence" value="ECO:0007669"/>
    <property type="project" value="UniProtKB-UniRule"/>
</dbReference>
<dbReference type="GO" id="GO:0003677">
    <property type="term" value="F:DNA binding"/>
    <property type="evidence" value="ECO:0007669"/>
    <property type="project" value="UniProtKB-KW"/>
</dbReference>
<dbReference type="GO" id="GO:0000287">
    <property type="term" value="F:magnesium ion binding"/>
    <property type="evidence" value="ECO:0007669"/>
    <property type="project" value="UniProtKB-UniRule"/>
</dbReference>
<dbReference type="GO" id="GO:0006310">
    <property type="term" value="P:DNA recombination"/>
    <property type="evidence" value="ECO:0007669"/>
    <property type="project" value="UniProtKB-UniRule"/>
</dbReference>
<dbReference type="GO" id="GO:0006281">
    <property type="term" value="P:DNA repair"/>
    <property type="evidence" value="ECO:0007669"/>
    <property type="project" value="UniProtKB-UniRule"/>
</dbReference>
<dbReference type="CDD" id="cd16962">
    <property type="entry name" value="RuvC"/>
    <property type="match status" value="1"/>
</dbReference>
<dbReference type="FunFam" id="3.30.420.10:FF:000002">
    <property type="entry name" value="Crossover junction endodeoxyribonuclease RuvC"/>
    <property type="match status" value="1"/>
</dbReference>
<dbReference type="Gene3D" id="3.30.420.10">
    <property type="entry name" value="Ribonuclease H-like superfamily/Ribonuclease H"/>
    <property type="match status" value="1"/>
</dbReference>
<dbReference type="HAMAP" id="MF_00034">
    <property type="entry name" value="RuvC"/>
    <property type="match status" value="1"/>
</dbReference>
<dbReference type="InterPro" id="IPR012337">
    <property type="entry name" value="RNaseH-like_sf"/>
</dbReference>
<dbReference type="InterPro" id="IPR036397">
    <property type="entry name" value="RNaseH_sf"/>
</dbReference>
<dbReference type="InterPro" id="IPR020563">
    <property type="entry name" value="X-over_junc_endoDNase_Mg_BS"/>
</dbReference>
<dbReference type="InterPro" id="IPR002176">
    <property type="entry name" value="X-over_junc_endoDNase_RuvC"/>
</dbReference>
<dbReference type="NCBIfam" id="TIGR00228">
    <property type="entry name" value="ruvC"/>
    <property type="match status" value="1"/>
</dbReference>
<dbReference type="PANTHER" id="PTHR30194">
    <property type="entry name" value="CROSSOVER JUNCTION ENDODEOXYRIBONUCLEASE RUVC"/>
    <property type="match status" value="1"/>
</dbReference>
<dbReference type="PANTHER" id="PTHR30194:SF3">
    <property type="entry name" value="CROSSOVER JUNCTION ENDODEOXYRIBONUCLEASE RUVC"/>
    <property type="match status" value="1"/>
</dbReference>
<dbReference type="Pfam" id="PF02075">
    <property type="entry name" value="RuvC"/>
    <property type="match status" value="1"/>
</dbReference>
<dbReference type="PRINTS" id="PR00696">
    <property type="entry name" value="RSOLVASERUVC"/>
</dbReference>
<dbReference type="SUPFAM" id="SSF53098">
    <property type="entry name" value="Ribonuclease H-like"/>
    <property type="match status" value="1"/>
</dbReference>
<dbReference type="PROSITE" id="PS01321">
    <property type="entry name" value="RUVC"/>
    <property type="match status" value="1"/>
</dbReference>
<name>RUVC_SACD2</name>
<reference key="1">
    <citation type="journal article" date="2008" name="PLoS Genet.">
        <title>Complete genome sequence of the complex carbohydrate-degrading marine bacterium, Saccharophagus degradans strain 2-40 T.</title>
        <authorList>
            <person name="Weiner R.M."/>
            <person name="Taylor L.E. II"/>
            <person name="Henrissat B."/>
            <person name="Hauser L."/>
            <person name="Land M."/>
            <person name="Coutinho P.M."/>
            <person name="Rancurel C."/>
            <person name="Saunders E.H."/>
            <person name="Longmire A.G."/>
            <person name="Zhang H."/>
            <person name="Bayer E.A."/>
            <person name="Gilbert H.J."/>
            <person name="Larimer F."/>
            <person name="Zhulin I.B."/>
            <person name="Ekborg N.A."/>
            <person name="Lamed R."/>
            <person name="Richardson P.M."/>
            <person name="Borovok I."/>
            <person name="Hutcheson S."/>
        </authorList>
    </citation>
    <scope>NUCLEOTIDE SEQUENCE [LARGE SCALE GENOMIC DNA]</scope>
    <source>
        <strain>2-40 / ATCC 43961 / DSM 17024</strain>
    </source>
</reference>
<sequence length="173" mass="18447">MAIVLGVDPGSLKTGFGLVNHVSGRCEYIASGVIRMKSSDELPERLKTIFESLVEIIECYQPSEFAIEKVFMAKSAGSALKLGQARGAAIVAAVTNGLPVGEYEARKVKQSVVGSGAADKSQVQHMVRTLLHLTATPQEDAADALAIALCHINTQASLIRLAGSRQFRRGRLV</sequence>
<organism>
    <name type="scientific">Saccharophagus degradans (strain 2-40 / ATCC 43961 / DSM 17024)</name>
    <dbReference type="NCBI Taxonomy" id="203122"/>
    <lineage>
        <taxon>Bacteria</taxon>
        <taxon>Pseudomonadati</taxon>
        <taxon>Pseudomonadota</taxon>
        <taxon>Gammaproteobacteria</taxon>
        <taxon>Cellvibrionales</taxon>
        <taxon>Cellvibrionaceae</taxon>
        <taxon>Saccharophagus</taxon>
    </lineage>
</organism>
<protein>
    <recommendedName>
        <fullName evidence="1">Crossover junction endodeoxyribonuclease RuvC</fullName>
        <ecNumber evidence="1">3.1.21.10</ecNumber>
    </recommendedName>
    <alternativeName>
        <fullName evidence="1">Holliday junction nuclease RuvC</fullName>
    </alternativeName>
    <alternativeName>
        <fullName evidence="1">Holliday junction resolvase RuvC</fullName>
    </alternativeName>
</protein>
<evidence type="ECO:0000255" key="1">
    <source>
        <dbReference type="HAMAP-Rule" id="MF_00034"/>
    </source>
</evidence>